<name>Y4OP_SINFN</name>
<geneLocation type="plasmid">
    <name>sym pNGR234a</name>
</geneLocation>
<feature type="signal peptide" evidence="1">
    <location>
        <begin position="1"/>
        <end position="25"/>
    </location>
</feature>
<feature type="chain" id="PRO_0000031718" description="Probable amino-acid ABC transporter periplasmic-binding protein y4oP">
    <location>
        <begin position="26"/>
        <end position="431"/>
    </location>
</feature>
<proteinExistence type="inferred from homology"/>
<evidence type="ECO:0000255" key="1"/>
<evidence type="ECO:0000305" key="2"/>
<comment type="function">
    <text>Probably part of the binding-protein-dependent transport system y4oPQRS. This system probably transports a sugar-like molecule.</text>
</comment>
<comment type="subcellular location">
    <subcellularLocation>
        <location evidence="2">Periplasm</location>
    </subcellularLocation>
</comment>
<comment type="similarity">
    <text evidence="2">Belongs to the bacterial solute-binding protein 1 family.</text>
</comment>
<sequence>MKRRTFTAGLAALPFLGSSLTRAFAQDAAASLPKTYSGQKIRALASTGAAFEAMATVSRDFTEATGIAVEYVNLSYNEQYQKLILDLTSGAASFDVFNFAYQWKFEIEPYCADLANIPKEIQGAPDLALDDYPQRALEIYGRANNKLIGLPTLGDVTLFVWNKEAYKAAGLDPDAAPKTWDEVVERGAKLVSNGQFGYAMPAGKGIQTTVTWIMVFKSMGGEYFDASGAPTFASEAGVKTMKFLVEKLAAVSPPGNLAWDFPEMFNSLSTGQSGQSMMWPGAFGDLLNPKRSQVHDKIGWSPMPQASLLGGWSMGVNDASRSKDAAKLYVAWLTSPDIVRRMGLIGGAPARISALKDPELIKQAPNRPAVLAGLQGDVAEYPPIKEAEQVHIMIYDEVNAAVAKIKTPEQAASDLQGKVESFMRRRGYLKT</sequence>
<protein>
    <recommendedName>
        <fullName>Probable amino-acid ABC transporter periplasmic-binding protein y4oP</fullName>
    </recommendedName>
</protein>
<keyword id="KW-0574">Periplasm</keyword>
<keyword id="KW-0614">Plasmid</keyword>
<keyword id="KW-1185">Reference proteome</keyword>
<keyword id="KW-0732">Signal</keyword>
<keyword id="KW-0813">Transport</keyword>
<accession>P55601</accession>
<gene>
    <name type="ordered locus">NGR_a02200</name>
    <name type="ORF">y4oP</name>
</gene>
<organism>
    <name type="scientific">Sinorhizobium fredii (strain NBRC 101917 / NGR234)</name>
    <dbReference type="NCBI Taxonomy" id="394"/>
    <lineage>
        <taxon>Bacteria</taxon>
        <taxon>Pseudomonadati</taxon>
        <taxon>Pseudomonadota</taxon>
        <taxon>Alphaproteobacteria</taxon>
        <taxon>Hyphomicrobiales</taxon>
        <taxon>Rhizobiaceae</taxon>
        <taxon>Sinorhizobium/Ensifer group</taxon>
        <taxon>Sinorhizobium</taxon>
    </lineage>
</organism>
<reference key="1">
    <citation type="journal article" date="1997" name="Nature">
        <title>Molecular basis of symbiosis between Rhizobium and legumes.</title>
        <authorList>
            <person name="Freiberg C.A."/>
            <person name="Fellay R."/>
            <person name="Bairoch A."/>
            <person name="Broughton W.J."/>
            <person name="Rosenthal A."/>
            <person name="Perret X."/>
        </authorList>
    </citation>
    <scope>NUCLEOTIDE SEQUENCE [LARGE SCALE GENOMIC DNA]</scope>
    <source>
        <strain>NBRC 101917 / NGR234</strain>
    </source>
</reference>
<reference key="2">
    <citation type="journal article" date="2009" name="Appl. Environ. Microbiol.">
        <title>Rhizobium sp. strain NGR234 possesses a remarkable number of secretion systems.</title>
        <authorList>
            <person name="Schmeisser C."/>
            <person name="Liesegang H."/>
            <person name="Krysciak D."/>
            <person name="Bakkou N."/>
            <person name="Le Quere A."/>
            <person name="Wollherr A."/>
            <person name="Heinemeyer I."/>
            <person name="Morgenstern B."/>
            <person name="Pommerening-Roeser A."/>
            <person name="Flores M."/>
            <person name="Palacios R."/>
            <person name="Brenner S."/>
            <person name="Gottschalk G."/>
            <person name="Schmitz R.A."/>
            <person name="Broughton W.J."/>
            <person name="Perret X."/>
            <person name="Strittmatter A.W."/>
            <person name="Streit W.R."/>
        </authorList>
    </citation>
    <scope>NUCLEOTIDE SEQUENCE [LARGE SCALE GENOMIC DNA]</scope>
    <source>
        <strain>NBRC 101917 / NGR234</strain>
    </source>
</reference>
<dbReference type="EMBL" id="U00090">
    <property type="protein sequence ID" value="AAB91802.1"/>
    <property type="molecule type" value="Genomic_DNA"/>
</dbReference>
<dbReference type="RefSeq" id="NP_444005.1">
    <property type="nucleotide sequence ID" value="NC_000914.2"/>
</dbReference>
<dbReference type="RefSeq" id="WP_010875247.1">
    <property type="nucleotide sequence ID" value="NC_000914.2"/>
</dbReference>
<dbReference type="SMR" id="P55601"/>
<dbReference type="KEGG" id="rhi:NGR_a02200"/>
<dbReference type="PATRIC" id="fig|394.7.peg.231"/>
<dbReference type="eggNOG" id="COG1653">
    <property type="taxonomic scope" value="Bacteria"/>
</dbReference>
<dbReference type="HOGENOM" id="CLU_031285_9_2_5"/>
<dbReference type="OrthoDB" id="9812682at2"/>
<dbReference type="Proteomes" id="UP000001054">
    <property type="component" value="Plasmid pNGR234a"/>
</dbReference>
<dbReference type="GO" id="GO:0042597">
    <property type="term" value="C:periplasmic space"/>
    <property type="evidence" value="ECO:0007669"/>
    <property type="project" value="UniProtKB-SubCell"/>
</dbReference>
<dbReference type="Gene3D" id="3.40.190.10">
    <property type="entry name" value="Periplasmic binding protein-like II"/>
    <property type="match status" value="2"/>
</dbReference>
<dbReference type="InterPro" id="IPR050490">
    <property type="entry name" value="Bact_solute-bd_prot1"/>
</dbReference>
<dbReference type="InterPro" id="IPR006059">
    <property type="entry name" value="SBP"/>
</dbReference>
<dbReference type="PANTHER" id="PTHR43649:SF34">
    <property type="entry name" value="ABC TRANSPORTER PERIPLASMIC-BINDING PROTEIN YCJN-RELATED"/>
    <property type="match status" value="1"/>
</dbReference>
<dbReference type="PANTHER" id="PTHR43649">
    <property type="entry name" value="ARABINOSE-BINDING PROTEIN-RELATED"/>
    <property type="match status" value="1"/>
</dbReference>
<dbReference type="Pfam" id="PF01547">
    <property type="entry name" value="SBP_bac_1"/>
    <property type="match status" value="1"/>
</dbReference>
<dbReference type="SUPFAM" id="SSF53850">
    <property type="entry name" value="Periplasmic binding protein-like II"/>
    <property type="match status" value="1"/>
</dbReference>